<sequence length="870" mass="98912">MASASSSRAGVALPFEKSQLTLKVVSAKPKVHNRQPRINSYVEVAVDGLPSETKKTGKRIGSSELLWNEIIILNVTAQSHLDLKVWSCHTLRNELLGTASVNLSNVLKNNGGKMENMQLTLNLQTENKGSVVSGGELTIFLDGPTVDLGNVPNGSALTDGSQLPSRDSSGTAVAPENRHQPPSTNCFGGRSRTHRHSGASARTTPATGEQSPGARSRHRQPVKNSGHSGLANGTVNDEPTTATDPEEPSVVGVTSPPAAPLSVTPNPNTTSLPAPATPAEGEEPSTSGTQQLPAAAQAPDALPAGWEQRELPNGRVYYVDHNTKTTTWERPLPPGWEKRTDPRGRFYYVDHNTRTTTWQRPTAEYVRNYEQWQSQRNQLQGAMQHFSQRFLYQSSSASTDHDPLGPLPPGWEKRQDNGRVYYVNHNTRTTQWEDPRTQGMIQEPALPPGWEMKYTSEGVRYFVDHNTRTTTFKDPRPGFESGTKQGSPGAYDRSFRWKYHQFRFLCHSNALPSHVKISVSRQTLFEDSFQQIMNMKPYDLRRRLYIIMRGEEGLDYGGIAREWFFLLSHEVLNPMYCLFEYAGKNNYCLQINPASSINPDHLTYFRFIGRFIAMALYHGKFIDTGFTLPFYKRMLNKRPTLKDLESIDPEFYNSIVWIKENNLEECGLELYFIQDMEILGKVTTHELKEGGESIRVTEENKEEYIMLLTDWRFTRGVEEQTKAFLDGFNEVAPLEWLRYFDEKELELMLCGMQEIDMSDWQKSTIYRHYTKNSKQIQWFWQVVKEMDNEKRIRLLQFVTGTCRLPVGGFAELIGSNGPQKFCIDKVGKETWLPRSHTCFNRLDLPPYKSYEQLREKLLYAIEETEGFGQE</sequence>
<accession>O00308</accession>
<accession>A6NEP1</accession>
<accession>B2R706</accession>
<accession>B4DTL5</accession>
<accession>F5H213</accession>
<accession>H3BRF3</accession>
<accession>I3RSG8</accession>
<accession>Q6ZTQ5</accession>
<accession>Q96CZ2</accession>
<accession>Q9BWN6</accession>
<feature type="chain" id="PRO_0000120338" description="NEDD4-like E3 ubiquitin-protein ligase WWP2">
    <location>
        <begin position="1"/>
        <end position="870"/>
    </location>
</feature>
<feature type="domain" description="C2" evidence="3">
    <location>
        <begin position="1"/>
        <end position="117"/>
    </location>
</feature>
<feature type="domain" description="WW 1" evidence="5">
    <location>
        <begin position="300"/>
        <end position="333"/>
    </location>
</feature>
<feature type="domain" description="WW 2" evidence="5">
    <location>
        <begin position="330"/>
        <end position="363"/>
    </location>
</feature>
<feature type="domain" description="WW 3" evidence="5">
    <location>
        <begin position="405"/>
        <end position="437"/>
    </location>
</feature>
<feature type="domain" description="WW 4" evidence="5">
    <location>
        <begin position="444"/>
        <end position="477"/>
    </location>
</feature>
<feature type="domain" description="HECT" evidence="4">
    <location>
        <begin position="536"/>
        <end position="870"/>
    </location>
</feature>
<feature type="region of interest" description="Disordered" evidence="6">
    <location>
        <begin position="151"/>
        <end position="299"/>
    </location>
</feature>
<feature type="compositionally biased region" description="Polar residues" evidence="6">
    <location>
        <begin position="152"/>
        <end position="171"/>
    </location>
</feature>
<feature type="compositionally biased region" description="Polar residues" evidence="6">
    <location>
        <begin position="200"/>
        <end position="210"/>
    </location>
</feature>
<feature type="compositionally biased region" description="Polar residues" evidence="6">
    <location>
        <begin position="222"/>
        <end position="243"/>
    </location>
</feature>
<feature type="compositionally biased region" description="Polar residues" evidence="6">
    <location>
        <begin position="263"/>
        <end position="272"/>
    </location>
</feature>
<feature type="compositionally biased region" description="Low complexity" evidence="6">
    <location>
        <begin position="290"/>
        <end position="299"/>
    </location>
</feature>
<feature type="active site" description="Glycyl thioester intermediate" evidence="4">
    <location>
        <position position="838"/>
    </location>
</feature>
<feature type="modified residue" description="Phosphoserine" evidence="23 24 25">
    <location>
        <position position="211"/>
    </location>
</feature>
<feature type="splice variant" id="VSP_046461" description="In isoform 3." evidence="20">
    <location>
        <begin position="1"/>
        <end position="439"/>
    </location>
</feature>
<feature type="splice variant" id="VSP_044706" description="In isoform 2." evidence="20">
    <location>
        <begin position="1"/>
        <end position="116"/>
    </location>
</feature>
<feature type="splice variant" id="VSP_054711" description="In isoform 4." evidence="21">
    <location>
        <begin position="336"/>
        <end position="870"/>
    </location>
</feature>
<feature type="mutagenesis site" description="Does not affect FBXL15-mediated ubiquitination." evidence="15">
    <original>K</original>
    <variation>R</variation>
    <location>
        <position position="498"/>
    </location>
</feature>
<feature type="mutagenesis site" description="Does not affect FBXL15-mediated ubiquitination." evidence="15">
    <original>H</original>
    <variation>K</variation>
    <location>
        <position position="500"/>
    </location>
</feature>
<feature type="mutagenesis site" description="Abolishes ubiquitination of POU5F1." evidence="10">
    <original>C</original>
    <variation>A</variation>
    <location>
        <position position="838"/>
    </location>
</feature>
<feature type="sequence conflict" description="In Ref. 1; AAC51325." evidence="22" ref="1">
    <original>E</original>
    <variation>K</variation>
    <location>
        <position position="136"/>
    </location>
</feature>
<feature type="sequence conflict" description="In Ref. 3; BAG62027." evidence="22" ref="3">
    <original>F</original>
    <variation>L</variation>
    <location>
        <position position="390"/>
    </location>
</feature>
<feature type="sequence conflict" description="In Ref. 1; AAC51325." evidence="22" ref="1">
    <original>SS</original>
    <variation>FW</variation>
    <location>
        <begin position="394"/>
        <end position="395"/>
    </location>
</feature>
<feature type="sequence conflict" description="In Ref. 3; BAC86528." evidence="22" ref="3">
    <original>Y</original>
    <variation>F</variation>
    <location>
        <position position="545"/>
    </location>
</feature>
<feature type="strand" evidence="28">
    <location>
        <begin position="336"/>
        <end position="340"/>
    </location>
</feature>
<feature type="strand" evidence="26">
    <location>
        <begin position="348"/>
        <end position="350"/>
    </location>
</feature>
<feature type="turn" evidence="26">
    <location>
        <begin position="351"/>
        <end position="354"/>
    </location>
</feature>
<feature type="strand" evidence="26">
    <location>
        <begin position="355"/>
        <end position="359"/>
    </location>
</feature>
<feature type="helix" evidence="32">
    <location>
        <begin position="363"/>
        <end position="386"/>
    </location>
</feature>
<feature type="strand" evidence="29">
    <location>
        <begin position="443"/>
        <end position="445"/>
    </location>
</feature>
<feature type="strand" evidence="29">
    <location>
        <begin position="450"/>
        <end position="454"/>
    </location>
</feature>
<feature type="strand" evidence="29">
    <location>
        <begin position="460"/>
        <end position="464"/>
    </location>
</feature>
<feature type="turn" evidence="29">
    <location>
        <begin position="465"/>
        <end position="468"/>
    </location>
</feature>
<feature type="strand" evidence="29">
    <location>
        <begin position="469"/>
        <end position="471"/>
    </location>
</feature>
<feature type="helix" evidence="29">
    <location>
        <begin position="477"/>
        <end position="479"/>
    </location>
</feature>
<feature type="helix" evidence="32">
    <location>
        <begin position="495"/>
        <end position="509"/>
    </location>
</feature>
<feature type="strand" evidence="32">
    <location>
        <begin position="512"/>
        <end position="519"/>
    </location>
</feature>
<feature type="helix" evidence="27">
    <location>
        <begin position="521"/>
        <end position="523"/>
    </location>
</feature>
<feature type="helix" evidence="32">
    <location>
        <begin position="524"/>
        <end position="533"/>
    </location>
</feature>
<feature type="helix" evidence="32">
    <location>
        <begin position="537"/>
        <end position="541"/>
    </location>
</feature>
<feature type="strand" evidence="32">
    <location>
        <begin position="542"/>
        <end position="548"/>
    </location>
</feature>
<feature type="helix" evidence="32">
    <location>
        <begin position="556"/>
        <end position="570"/>
    </location>
</feature>
<feature type="helix" evidence="32">
    <location>
        <begin position="574"/>
        <end position="576"/>
    </location>
</feature>
<feature type="strand" evidence="32">
    <location>
        <begin position="579"/>
        <end position="583"/>
    </location>
</feature>
<feature type="turn" evidence="32">
    <location>
        <begin position="584"/>
        <end position="586"/>
    </location>
</feature>
<feature type="strand" evidence="32">
    <location>
        <begin position="587"/>
        <end position="591"/>
    </location>
</feature>
<feature type="helix" evidence="32">
    <location>
        <begin position="595"/>
        <end position="597"/>
    </location>
</feature>
<feature type="helix" evidence="32">
    <location>
        <begin position="601"/>
        <end position="617"/>
    </location>
</feature>
<feature type="helix" evidence="32">
    <location>
        <begin position="628"/>
        <end position="634"/>
    </location>
</feature>
<feature type="helix" evidence="32">
    <location>
        <begin position="641"/>
        <end position="647"/>
    </location>
</feature>
<feature type="helix" evidence="32">
    <location>
        <begin position="649"/>
        <end position="660"/>
    </location>
</feature>
<feature type="turn" evidence="30">
    <location>
        <begin position="663"/>
        <end position="667"/>
    </location>
</feature>
<feature type="strand" evidence="32">
    <location>
        <begin position="671"/>
        <end position="677"/>
    </location>
</feature>
<feature type="strand" evidence="32">
    <location>
        <begin position="682"/>
        <end position="688"/>
    </location>
</feature>
<feature type="turn" evidence="32">
    <location>
        <begin position="689"/>
        <end position="693"/>
    </location>
</feature>
<feature type="turn" evidence="30">
    <location>
        <begin position="698"/>
        <end position="700"/>
    </location>
</feature>
<feature type="helix" evidence="32">
    <location>
        <begin position="701"/>
        <end position="714"/>
    </location>
</feature>
<feature type="helix" evidence="32">
    <location>
        <begin position="718"/>
        <end position="731"/>
    </location>
</feature>
<feature type="helix" evidence="32">
    <location>
        <begin position="734"/>
        <end position="737"/>
    </location>
</feature>
<feature type="helix" evidence="32">
    <location>
        <begin position="742"/>
        <end position="750"/>
    </location>
</feature>
<feature type="helix" evidence="32">
    <location>
        <begin position="757"/>
        <end position="762"/>
    </location>
</feature>
<feature type="strand" evidence="32">
    <location>
        <begin position="765"/>
        <end position="768"/>
    </location>
</feature>
<feature type="helix" evidence="32">
    <location>
        <begin position="774"/>
        <end position="785"/>
    </location>
</feature>
<feature type="helix" evidence="32">
    <location>
        <begin position="788"/>
        <end position="799"/>
    </location>
</feature>
<feature type="strand" evidence="31">
    <location>
        <begin position="800"/>
        <end position="802"/>
    </location>
</feature>
<feature type="helix" evidence="32">
    <location>
        <begin position="809"/>
        <end position="811"/>
    </location>
</feature>
<feature type="strand" evidence="26">
    <location>
        <begin position="817"/>
        <end position="819"/>
    </location>
</feature>
<feature type="strand" evidence="32">
    <location>
        <begin position="822"/>
        <end position="824"/>
    </location>
</feature>
<feature type="strand" evidence="27">
    <location>
        <begin position="829"/>
        <end position="831"/>
    </location>
</feature>
<feature type="strand" evidence="32">
    <location>
        <begin position="834"/>
        <end position="836"/>
    </location>
</feature>
<feature type="helix" evidence="32">
    <location>
        <begin position="837"/>
        <end position="839"/>
    </location>
</feature>
<feature type="strand" evidence="32">
    <location>
        <begin position="841"/>
        <end position="843"/>
    </location>
</feature>
<feature type="helix" evidence="32">
    <location>
        <begin position="850"/>
        <end position="862"/>
    </location>
</feature>
<comment type="function">
    <text evidence="10 12">E3 ubiquitin-protein ligase which accepts ubiquitin from an E2 ubiquitin-conjugating enzyme in the form of a thioester and then directly transfers the ubiquitin to targeted substrates. Polyubiquitinates POU5F1 by 'Lys-63'-linked conjugation and promotes it to proteasomal degradation; in embryonic stem cells (ESCs) the ubiquitination is proposed to regulate POU5F1 protein level. Ubiquitinates EGR2 and promotes it to proteasomal degradation; in T-cells the ubiquitination inhibits activation-induced cell death. Ubiquitinates SLC11A2; the ubiquitination is enhanced by presence of NDFIP1 and NDFIP2. Ubiquitinates RPB1 and promotes it to proteasomal degradation.</text>
</comment>
<comment type="catalytic activity">
    <reaction evidence="10 12">
        <text>S-ubiquitinyl-[E2 ubiquitin-conjugating enzyme]-L-cysteine + [acceptor protein]-L-lysine = [E2 ubiquitin-conjugating enzyme]-L-cysteine + N(6)-ubiquitinyl-[acceptor protein]-L-lysine.</text>
        <dbReference type="EC" id="2.3.2.26"/>
    </reaction>
</comment>
<comment type="activity regulation">
    <text evidence="11">Activated by NDFIP1- and NDFIP2-binding.</text>
</comment>
<comment type="pathway">
    <text evidence="10 12">Protein modification; protein ubiquitination.</text>
</comment>
<comment type="subunit">
    <text evidence="2 7 8 10 12 13 14 16 17 18 19">Interacts with POU5F1, RBP1, EGR2 and SLC11A2 (By similarity). Interacts with SCNN1A, SCNN1B, SCNN1G, WBP1, WBP2 and ATN1. Interacts with ERBB4, NDFIP1 and NDFIP2. Interacts with ARRDC4 (PubMed:23236378). Interacts (via WW domains) with ARRDC1 (via PPxY motifs); ubiquitinates ARRDC1 (PubMed:21191027, PubMed:22315426). Interacts (via WW domains) with ARRDC2 and ARRDC3 (PubMed:21191027).</text>
</comment>
<comment type="subunit">
    <text evidence="9">(Microbial infection) Interacts with adenovirus type 2 PIII.</text>
</comment>
<comment type="interaction">
    <interactant intactId="EBI-743923">
        <id>O00308</id>
    </interactant>
    <interactant intactId="EBI-2967304">
        <id>P78563</id>
        <label>ADARB1</label>
    </interactant>
    <organismsDiffer>false</organismsDiffer>
    <experiments>5</experiments>
</comment>
<comment type="interaction">
    <interactant intactId="EBI-743923">
        <id>O00308</id>
    </interactant>
    <interactant intactId="EBI-1245329">
        <id>Q8N8A2</id>
        <label>ANKRD44</label>
    </interactant>
    <organismsDiffer>false</organismsDiffer>
    <experiments>5</experiments>
</comment>
<comment type="interaction">
    <interactant intactId="EBI-743923">
        <id>O00308</id>
    </interactant>
    <interactant intactId="EBI-2339564">
        <id>Q8N5I2</id>
        <label>ARRDC1</label>
    </interactant>
    <organismsDiffer>false</organismsDiffer>
    <experiments>8</experiments>
</comment>
<comment type="interaction">
    <interactant intactId="EBI-743923">
        <id>O00308</id>
    </interactant>
    <interactant intactId="EBI-2875665">
        <id>Q96B67</id>
        <label>ARRDC3</label>
    </interactant>
    <organismsDiffer>false</organismsDiffer>
    <experiments>5</experiments>
</comment>
<comment type="interaction">
    <interactant intactId="EBI-743923">
        <id>O00308</id>
    </interactant>
    <interactant intactId="EBI-11954292">
        <id>Q86V38</id>
        <label>ATN1</label>
    </interactant>
    <organismsDiffer>false</organismsDiffer>
    <experiments>3</experiments>
</comment>
<comment type="interaction">
    <interactant intactId="EBI-743923">
        <id>O00308</id>
    </interactant>
    <interactant intactId="EBI-745689">
        <id>Q7L5A3</id>
        <label>ATOSB</label>
    </interactant>
    <organismsDiffer>false</organismsDiffer>
    <experiments>3</experiments>
</comment>
<comment type="interaction">
    <interactant intactId="EBI-743923">
        <id>O00308</id>
    </interactant>
    <interactant intactId="EBI-355710">
        <id>P48643</id>
        <label>CCT5</label>
    </interactant>
    <organismsDiffer>false</organismsDiffer>
    <experiments>6</experiments>
</comment>
<comment type="interaction">
    <interactant intactId="EBI-743923">
        <id>O00308</id>
    </interactant>
    <interactant intactId="EBI-349854">
        <id>P13569</id>
        <label>CFTR</label>
    </interactant>
    <organismsDiffer>false</organismsDiffer>
    <experiments>3</experiments>
</comment>
<comment type="interaction">
    <interactant intactId="EBI-743923">
        <id>O00308</id>
    </interactant>
    <interactant intactId="EBI-6165897">
        <id>Q9NWW5</id>
        <label>CLN6</label>
    </interactant>
    <organismsDiffer>false</organismsDiffer>
    <experiments>3</experiments>
</comment>
<comment type="interaction">
    <interactant intactId="EBI-743923">
        <id>O00308</id>
    </interactant>
    <interactant intactId="EBI-358410">
        <id>Q16630</id>
        <label>CPSF6</label>
    </interactant>
    <organismsDiffer>false</organismsDiffer>
    <experiments>4</experiments>
</comment>
<comment type="interaction">
    <interactant intactId="EBI-743923">
        <id>O00308</id>
    </interactant>
    <interactant intactId="EBI-2115097">
        <id>P07339</id>
        <label>CTSD</label>
    </interactant>
    <organismsDiffer>false</organismsDiffer>
    <experiments>3</experiments>
</comment>
<comment type="interaction">
    <interactant intactId="EBI-743923">
        <id>O00308</id>
    </interactant>
    <interactant intactId="EBI-25840379">
        <id>Q14203-5</id>
        <label>DCTN1</label>
    </interactant>
    <organismsDiffer>false</organismsDiffer>
    <experiments>3</experiments>
</comment>
<comment type="interaction">
    <interactant intactId="EBI-743923">
        <id>O00308</id>
    </interactant>
    <interactant intactId="EBI-10976677">
        <id>G5E9A7</id>
        <label>DMWD</label>
    </interactant>
    <organismsDiffer>false</organismsDiffer>
    <experiments>3</experiments>
</comment>
<comment type="interaction">
    <interactant intactId="EBI-743923">
        <id>O00308</id>
    </interactant>
    <interactant intactId="EBI-10968534">
        <id>P50570-2</id>
        <label>DNM2</label>
    </interactant>
    <organismsDiffer>false</organismsDiffer>
    <experiments>3</experiments>
</comment>
<comment type="interaction">
    <interactant intactId="EBI-743923">
        <id>O00308</id>
    </interactant>
    <interactant intactId="EBI-356015">
        <id>Q14204</id>
        <label>DYNC1H1</label>
    </interactant>
    <organismsDiffer>false</organismsDiffer>
    <experiments>3</experiments>
</comment>
<comment type="interaction">
    <interactant intactId="EBI-743923">
        <id>O00308</id>
    </interactant>
    <interactant intactId="EBI-11958551">
        <id>Q8N7B9-2</id>
        <label>EFCAB3</label>
    </interactant>
    <organismsDiffer>false</organismsDiffer>
    <experiments>3</experiments>
</comment>
<comment type="interaction">
    <interactant intactId="EBI-743923">
        <id>O00308</id>
    </interactant>
    <interactant intactId="EBI-8636612">
        <id>Q15884</id>
        <label>ENTREP1</label>
    </interactant>
    <organismsDiffer>false</organismsDiffer>
    <experiments>6</experiments>
</comment>
<comment type="interaction">
    <interactant intactId="EBI-743923">
        <id>O00308</id>
    </interactant>
    <interactant intactId="EBI-744419">
        <id>Q96D16</id>
        <label>FBXL18</label>
    </interactant>
    <organismsDiffer>false</organismsDiffer>
    <experiments>3</experiments>
</comment>
<comment type="interaction">
    <interactant intactId="EBI-743923">
        <id>O00308</id>
    </interactant>
    <interactant intactId="EBI-372506">
        <id>Q8TAE8</id>
        <label>GADD45GIP1</label>
    </interactant>
    <organismsDiffer>false</organismsDiffer>
    <experiments>3</experiments>
</comment>
<comment type="interaction">
    <interactant intactId="EBI-743923">
        <id>O00308</id>
    </interactant>
    <interactant intactId="EBI-7960826">
        <id>Q8NHY3</id>
        <label>GAS2L2</label>
    </interactant>
    <organismsDiffer>false</organismsDiffer>
    <experiments>3</experiments>
</comment>
<comment type="interaction">
    <interactant intactId="EBI-743923">
        <id>O00308</id>
    </interactant>
    <interactant intactId="EBI-10259069">
        <id>Q86UU5</id>
        <label>GGN</label>
    </interactant>
    <organismsDiffer>false</organismsDiffer>
    <experiments>3</experiments>
</comment>
<comment type="interaction">
    <interactant intactId="EBI-743923">
        <id>O00308</id>
    </interactant>
    <interactant intactId="EBI-7133736">
        <id>P07686</id>
        <label>HEXB</label>
    </interactant>
    <organismsDiffer>false</organismsDiffer>
    <experiments>3</experiments>
</comment>
<comment type="interaction">
    <interactant intactId="EBI-743923">
        <id>O00308</id>
    </interactant>
    <interactant intactId="EBI-1018153">
        <id>Q9BUJ2</id>
        <label>HNRNPUL1</label>
    </interactant>
    <organismsDiffer>false</organismsDiffer>
    <experiments>9</experiments>
</comment>
<comment type="interaction">
    <interactant intactId="EBI-743923">
        <id>O00308</id>
    </interactant>
    <interactant intactId="EBI-517086">
        <id>O43464</id>
        <label>HTRA2</label>
    </interactant>
    <organismsDiffer>false</organismsDiffer>
    <experiments>3</experiments>
</comment>
<comment type="interaction">
    <interactant intactId="EBI-743923">
        <id>O00308</id>
    </interactant>
    <interactant intactId="EBI-466029">
        <id>P42858</id>
        <label>HTT</label>
    </interactant>
    <organismsDiffer>false</organismsDiffer>
    <experiments>9</experiments>
</comment>
<comment type="interaction">
    <interactant intactId="EBI-743923">
        <id>O00308</id>
    </interactant>
    <interactant intactId="EBI-746217">
        <id>Q8IZ03</id>
        <label>IFIT2</label>
    </interactant>
    <organismsDiffer>false</organismsDiffer>
    <experiments>3</experiments>
</comment>
<comment type="interaction">
    <interactant intactId="EBI-743923">
        <id>O00308</id>
    </interactant>
    <interactant intactId="EBI-1055254">
        <id>Q8WXH2</id>
        <label>JPH3</label>
    </interactant>
    <organismsDiffer>false</organismsDiffer>
    <experiments>3</experiments>
</comment>
<comment type="interaction">
    <interactant intactId="EBI-743923">
        <id>O00308</id>
    </interactant>
    <interactant intactId="EBI-2432309">
        <id>Q92876</id>
        <label>KLK6</label>
    </interactant>
    <organismsDiffer>false</organismsDiffer>
    <experiments>3</experiments>
</comment>
<comment type="interaction">
    <interactant intactId="EBI-743923">
        <id>O00308</id>
    </interactant>
    <interactant intactId="EBI-10240775">
        <id>Q3B8N2</id>
        <label>LGALS9B</label>
    </interactant>
    <organismsDiffer>false</organismsDiffer>
    <experiments>5</experiments>
</comment>
<comment type="interaction">
    <interactant intactId="EBI-743923">
        <id>O00308</id>
    </interactant>
    <interactant intactId="EBI-725647">
        <id>Q99732</id>
        <label>LITAF</label>
    </interactant>
    <organismsDiffer>false</organismsDiffer>
    <experiments>3</experiments>
</comment>
<comment type="interaction">
    <interactant intactId="EBI-743923">
        <id>O00308</id>
    </interactant>
    <interactant intactId="EBI-394558">
        <id>Q71SY5</id>
        <label>MED25</label>
    </interactant>
    <organismsDiffer>false</organismsDiffer>
    <experiments>3</experiments>
</comment>
<comment type="interaction">
    <interactant intactId="EBI-743923">
        <id>O00308</id>
    </interactant>
    <interactant intactId="EBI-1149760">
        <id>Q15599</id>
        <label>NHERF2</label>
    </interactant>
    <organismsDiffer>false</organismsDiffer>
    <experiments>3</experiments>
</comment>
<comment type="interaction">
    <interactant intactId="EBI-743923">
        <id>O00308</id>
    </interactant>
    <interactant intactId="EBI-11022007">
        <id>Q9HBE1-4</id>
        <label>PATZ1</label>
    </interactant>
    <organismsDiffer>false</organismsDiffer>
    <experiments>3</experiments>
</comment>
<comment type="interaction">
    <interactant intactId="EBI-743923">
        <id>O00308</id>
    </interactant>
    <interactant intactId="EBI-350517">
        <id>Q9NR12</id>
        <label>PDLIM7</label>
    </interactant>
    <organismsDiffer>false</organismsDiffer>
    <experiments>6</experiments>
</comment>
<comment type="interaction">
    <interactant intactId="EBI-743923">
        <id>O00308</id>
    </interactant>
    <interactant intactId="EBI-988601">
        <id>O43933</id>
        <label>PEX1</label>
    </interactant>
    <organismsDiffer>false</organismsDiffer>
    <experiments>3</experiments>
</comment>
<comment type="interaction">
    <interactant intactId="EBI-743923">
        <id>O00308</id>
    </interactant>
    <interactant intactId="EBI-475687">
        <id>Q01860</id>
        <label>POU5F1</label>
    </interactant>
    <organismsDiffer>false</organismsDiffer>
    <experiments>4</experiments>
</comment>
<comment type="interaction">
    <interactant intactId="EBI-743923">
        <id>O00308</id>
    </interactant>
    <interactant intactId="EBI-1383852">
        <id>P54646</id>
        <label>PRKAA2</label>
    </interactant>
    <organismsDiffer>false</organismsDiffer>
    <experiments>3</experiments>
</comment>
<comment type="interaction">
    <interactant intactId="EBI-743923">
        <id>O00308</id>
    </interactant>
    <interactant intactId="EBI-21251460">
        <id>O60260-5</id>
        <label>PRKN</label>
    </interactant>
    <organismsDiffer>false</organismsDiffer>
    <experiments>3</experiments>
</comment>
<comment type="interaction">
    <interactant intactId="EBI-743923">
        <id>O00308</id>
    </interactant>
    <interactant intactId="EBI-749195">
        <id>P60891</id>
        <label>PRPS1</label>
    </interactant>
    <organismsDiffer>false</organismsDiffer>
    <experiments>3</experiments>
</comment>
<comment type="interaction">
    <interactant intactId="EBI-743923">
        <id>O00308</id>
    </interactant>
    <interactant intactId="EBI-740818">
        <id>Q9Y272</id>
        <label>RASD1</label>
    </interactant>
    <organismsDiffer>false</organismsDiffer>
    <experiments>3</experiments>
</comment>
<comment type="interaction">
    <interactant intactId="EBI-743923">
        <id>O00308</id>
    </interactant>
    <interactant intactId="EBI-396669">
        <id>Q9Y3C5</id>
        <label>RNF11</label>
    </interactant>
    <organismsDiffer>false</organismsDiffer>
    <experiments>7</experiments>
</comment>
<comment type="interaction">
    <interactant intactId="EBI-743923">
        <id>O00308</id>
    </interactant>
    <interactant intactId="EBI-6257312">
        <id>Q9BVN2</id>
        <label>RUSC1</label>
    </interactant>
    <organismsDiffer>false</organismsDiffer>
    <experiments>3</experiments>
</comment>
<comment type="interaction">
    <interactant intactId="EBI-743923">
        <id>O00308</id>
    </interactant>
    <interactant intactId="EBI-1040141">
        <id>Q15796</id>
        <label>SMAD2</label>
    </interactant>
    <organismsDiffer>false</organismsDiffer>
    <experiments>4</experiments>
</comment>
<comment type="interaction">
    <interactant intactId="EBI-743923">
        <id>O00308</id>
    </interactant>
    <interactant intactId="EBI-347161">
        <id>P84022</id>
        <label>SMAD3</label>
    </interactant>
    <organismsDiffer>false</organismsDiffer>
    <experiments>7</experiments>
</comment>
<comment type="interaction">
    <interactant intactId="EBI-743923">
        <id>O00308</id>
    </interactant>
    <interactant intactId="EBI-3861591">
        <id>O15105</id>
        <label>SMAD7</label>
    </interactant>
    <organismsDiffer>false</organismsDiffer>
    <experiments>5</experiments>
</comment>
<comment type="interaction">
    <interactant intactId="EBI-743923">
        <id>O00308</id>
    </interactant>
    <interactant intactId="EBI-358489">
        <id>Q96GM5</id>
        <label>SMARCD1</label>
    </interactant>
    <organismsDiffer>false</organismsDiffer>
    <experiments>5</experiments>
</comment>
<comment type="interaction">
    <interactant intactId="EBI-743923">
        <id>O00308</id>
    </interactant>
    <interactant intactId="EBI-12067698">
        <id>Q99954</id>
        <label>SMR3A</label>
    </interactant>
    <organismsDiffer>false</organismsDiffer>
    <experiments>3</experiments>
</comment>
<comment type="interaction">
    <interactant intactId="EBI-743923">
        <id>O00308</id>
    </interactant>
    <interactant intactId="EBI-985879">
        <id>P37840</id>
        <label>SNCA</label>
    </interactant>
    <organismsDiffer>false</organismsDiffer>
    <experiments>3</experiments>
</comment>
<comment type="interaction">
    <interactant intactId="EBI-743923">
        <id>O00308</id>
    </interactant>
    <interactant intactId="EBI-372475">
        <id>P14678-2</id>
        <label>SNRPB</label>
    </interactant>
    <organismsDiffer>false</organismsDiffer>
    <experiments>3</experiments>
</comment>
<comment type="interaction">
    <interactant intactId="EBI-743923">
        <id>O00308</id>
    </interactant>
    <interactant intactId="EBI-766589">
        <id>P09234</id>
        <label>SNRPC</label>
    </interactant>
    <organismsDiffer>false</organismsDiffer>
    <experiments>3</experiments>
</comment>
<comment type="interaction">
    <interactant intactId="EBI-743923">
        <id>O00308</id>
    </interactant>
    <interactant intactId="EBI-10246938">
        <id>Q5TAL4</id>
        <label>SNRPC</label>
    </interactant>
    <organismsDiffer>false</organismsDiffer>
    <experiments>3</experiments>
</comment>
<comment type="interaction">
    <interactant intactId="EBI-743923">
        <id>O00308</id>
    </interactant>
    <interactant intactId="EBI-372899">
        <id>Q13148</id>
        <label>TARDBP</label>
    </interactant>
    <organismsDiffer>false</organismsDiffer>
    <experiments>3</experiments>
</comment>
<comment type="interaction">
    <interactant intactId="EBI-743923">
        <id>O00308</id>
    </interactant>
    <interactant intactId="EBI-2800203">
        <id>O14773</id>
        <label>TPP1</label>
    </interactant>
    <organismsDiffer>false</organismsDiffer>
    <experiments>3</experiments>
</comment>
<comment type="interaction">
    <interactant intactId="EBI-743923">
        <id>O00308</id>
    </interactant>
    <interactant intactId="EBI-3650647">
        <id>Q9BUZ4</id>
        <label>TRAF4</label>
    </interactant>
    <organismsDiffer>false</organismsDiffer>
    <experiments>7</experiments>
</comment>
<comment type="interaction">
    <interactant intactId="EBI-743923">
        <id>O00308</id>
    </interactant>
    <interactant intactId="EBI-709688">
        <id>P22314</id>
        <label>UBA1</label>
    </interactant>
    <organismsDiffer>false</organismsDiffer>
    <experiments>3</experiments>
</comment>
<comment type="interaction">
    <interactant intactId="EBI-743923">
        <id>O00308</id>
    </interactant>
    <interactant intactId="EBI-2129763">
        <id>Q96LR5</id>
        <label>UBE2E2</label>
    </interactant>
    <organismsDiffer>false</organismsDiffer>
    <experiments>3</experiments>
</comment>
<comment type="interaction">
    <interactant intactId="EBI-743923">
        <id>O00308</id>
    </interactant>
    <interactant intactId="EBI-348496">
        <id>Q969T4</id>
        <label>UBE2E3</label>
    </interactant>
    <organismsDiffer>false</organismsDiffer>
    <experiments>3</experiments>
</comment>
<comment type="interaction">
    <interactant intactId="EBI-743923">
        <id>O00308</id>
    </interactant>
    <interactant intactId="EBI-745871">
        <id>Q9HAC8</id>
        <label>UBTD1</label>
    </interactant>
    <organismsDiffer>false</organismsDiffer>
    <experiments>3</experiments>
</comment>
<comment type="interaction">
    <interactant intactId="EBI-743923">
        <id>O00308</id>
    </interactant>
    <interactant intactId="EBI-2559305">
        <id>A5D8V6</id>
        <label>VPS37C</label>
    </interactant>
    <organismsDiffer>false</organismsDiffer>
    <experiments>6</experiments>
</comment>
<comment type="interaction">
    <interactant intactId="EBI-743923">
        <id>O00308</id>
    </interactant>
    <interactant intactId="EBI-540834">
        <id>P61964</id>
        <label>WDR5</label>
    </interactant>
    <organismsDiffer>false</organismsDiffer>
    <experiments>3</experiments>
</comment>
<comment type="interaction">
    <interactant intactId="EBI-743923">
        <id>O00308</id>
    </interactant>
    <interactant intactId="EBI-720609">
        <id>O76024</id>
        <label>WFS1</label>
    </interactant>
    <organismsDiffer>false</organismsDiffer>
    <experiments>6</experiments>
</comment>
<comment type="interaction">
    <interactant intactId="EBI-743923">
        <id>O00308</id>
    </interactant>
    <interactant intactId="EBI-346356">
        <id>O43516</id>
        <label>WIPF1</label>
    </interactant>
    <organismsDiffer>false</organismsDiffer>
    <experiments>4</experiments>
</comment>
<comment type="interaction">
    <interactant intactId="EBI-743923">
        <id>O00308</id>
    </interactant>
    <interactant intactId="EBI-356498">
        <id>P62258</id>
        <label>YWHAE</label>
    </interactant>
    <organismsDiffer>false</organismsDiffer>
    <experiments>2</experiments>
</comment>
<comment type="interaction">
    <interactant intactId="EBI-743923">
        <id>O00308</id>
    </interactant>
    <interactant intactId="EBI-16429014">
        <id>A0A0S2Z5X4</id>
        <label>ZNF688</label>
    </interactant>
    <organismsDiffer>false</organismsDiffer>
    <experiments>3</experiments>
</comment>
<comment type="interaction">
    <interactant intactId="EBI-743923">
        <id>O00308</id>
    </interactant>
    <interactant intactId="EBI-747182">
        <id>Q8WU02</id>
    </interactant>
    <organismsDiffer>false</organismsDiffer>
    <experiments>3</experiments>
</comment>
<comment type="subcellular location">
    <subcellularLocation>
        <location evidence="10 13">Nucleus</location>
    </subcellularLocation>
</comment>
<comment type="alternative products">
    <event type="alternative splicing"/>
    <isoform>
        <id>O00308-1</id>
        <name>1</name>
        <sequence type="displayed"/>
    </isoform>
    <isoform>
        <id>O00308-2</id>
        <name>2</name>
        <sequence type="described" ref="VSP_044706"/>
    </isoform>
    <isoform>
        <id>O00308-3</id>
        <name>3</name>
        <sequence type="described" ref="VSP_046461"/>
    </isoform>
    <isoform>
        <id>O00308-4</id>
        <name>4</name>
        <sequence type="described" ref="VSP_054711"/>
    </isoform>
</comment>
<comment type="tissue specificity">
    <text evidence="10 19">Detected in heart, throughout the brain, placenta, lung, liver, muscle, kidney and pancreas. Also detected in spleen and peripheral blood leukocytes.</text>
</comment>
<comment type="developmental stage">
    <text evidence="10">Highly expressed in undifferentiated embryonic stem cells and expression is reduced after embryoid body (EB) formation. Not detectable at day 13 of EB formation; low levels are again detected at day 18 of EB formation.</text>
</comment>
<comment type="domain">
    <text evidence="1">The C2 domain is involved in autoinhibition of the catalytic activity by interacting with the HECT domain.</text>
</comment>
<comment type="domain">
    <text evidence="14 16">The WW domains mediate interaction with PPxY motif-containing proteins.</text>
</comment>
<comment type="PTM">
    <text evidence="11 15">Autoubiquitinated. Ubiquitinated by the SCF(FBXL15) complex, leading to its degradation by the proteasome.</text>
</comment>
<comment type="miscellaneous">
    <text>A cysteine residue is required for ubiquitin-thioester formation.</text>
</comment>
<comment type="sequence caution" evidence="22">
    <conflict type="frameshift">
        <sequence resource="EMBL-CDS" id="BAC86528"/>
    </conflict>
</comment>
<reference key="1">
    <citation type="journal article" date="1997" name="J. Biol. Chem.">
        <title>Identification of novel human WW domain-containing proteins by cloning of ligand targets.</title>
        <authorList>
            <person name="Pirozzi G."/>
            <person name="McConnell S.J."/>
            <person name="Uveges A.J."/>
            <person name="Carter J.M."/>
            <person name="Sparks A.B."/>
            <person name="Kay B.K."/>
            <person name="Fowlkes D.M."/>
        </authorList>
    </citation>
    <scope>NUCLEOTIDE SEQUENCE [MRNA] (ISOFORM 1)</scope>
    <scope>INTERACTION WITH WBP1; WBP2; SCNN1A; SCNN1B AND SCNN1G</scope>
    <source>
        <tissue>Bone marrow</tissue>
        <tissue>Brain</tissue>
    </source>
</reference>
<reference key="2">
    <citation type="submission" date="2011-09" db="EMBL/GenBank/DDBJ databases">
        <title>Bioinformatic analysis of E3 ligase WWP2 in 14 different vertebrates.</title>
        <authorList>
            <person name="Jiang G.Y."/>
            <person name="Yang J.H."/>
            <person name="Liu S.F."/>
        </authorList>
    </citation>
    <scope>NUCLEOTIDE SEQUENCE [MRNA] (ISOFORM 1)</scope>
</reference>
<reference key="3">
    <citation type="journal article" date="2004" name="Nat. Genet.">
        <title>Complete sequencing and characterization of 21,243 full-length human cDNAs.</title>
        <authorList>
            <person name="Ota T."/>
            <person name="Suzuki Y."/>
            <person name="Nishikawa T."/>
            <person name="Otsuki T."/>
            <person name="Sugiyama T."/>
            <person name="Irie R."/>
            <person name="Wakamatsu A."/>
            <person name="Hayashi K."/>
            <person name="Sato H."/>
            <person name="Nagai K."/>
            <person name="Kimura K."/>
            <person name="Makita H."/>
            <person name="Sekine M."/>
            <person name="Obayashi M."/>
            <person name="Nishi T."/>
            <person name="Shibahara T."/>
            <person name="Tanaka T."/>
            <person name="Ishii S."/>
            <person name="Yamamoto J."/>
            <person name="Saito K."/>
            <person name="Kawai Y."/>
            <person name="Isono Y."/>
            <person name="Nakamura Y."/>
            <person name="Nagahari K."/>
            <person name="Murakami K."/>
            <person name="Yasuda T."/>
            <person name="Iwayanagi T."/>
            <person name="Wagatsuma M."/>
            <person name="Shiratori A."/>
            <person name="Sudo H."/>
            <person name="Hosoiri T."/>
            <person name="Kaku Y."/>
            <person name="Kodaira H."/>
            <person name="Kondo H."/>
            <person name="Sugawara M."/>
            <person name="Takahashi M."/>
            <person name="Kanda K."/>
            <person name="Yokoi T."/>
            <person name="Furuya T."/>
            <person name="Kikkawa E."/>
            <person name="Omura Y."/>
            <person name="Abe K."/>
            <person name="Kamihara K."/>
            <person name="Katsuta N."/>
            <person name="Sato K."/>
            <person name="Tanikawa M."/>
            <person name="Yamazaki M."/>
            <person name="Ninomiya K."/>
            <person name="Ishibashi T."/>
            <person name="Yamashita H."/>
            <person name="Murakawa K."/>
            <person name="Fujimori K."/>
            <person name="Tanai H."/>
            <person name="Kimata M."/>
            <person name="Watanabe M."/>
            <person name="Hiraoka S."/>
            <person name="Chiba Y."/>
            <person name="Ishida S."/>
            <person name="Ono Y."/>
            <person name="Takiguchi S."/>
            <person name="Watanabe S."/>
            <person name="Yosida M."/>
            <person name="Hotuta T."/>
            <person name="Kusano J."/>
            <person name="Kanehori K."/>
            <person name="Takahashi-Fujii A."/>
            <person name="Hara H."/>
            <person name="Tanase T.-O."/>
            <person name="Nomura Y."/>
            <person name="Togiya S."/>
            <person name="Komai F."/>
            <person name="Hara R."/>
            <person name="Takeuchi K."/>
            <person name="Arita M."/>
            <person name="Imose N."/>
            <person name="Musashino K."/>
            <person name="Yuuki H."/>
            <person name="Oshima A."/>
            <person name="Sasaki N."/>
            <person name="Aotsuka S."/>
            <person name="Yoshikawa Y."/>
            <person name="Matsunawa H."/>
            <person name="Ichihara T."/>
            <person name="Shiohata N."/>
            <person name="Sano S."/>
            <person name="Moriya S."/>
            <person name="Momiyama H."/>
            <person name="Satoh N."/>
            <person name="Takami S."/>
            <person name="Terashima Y."/>
            <person name="Suzuki O."/>
            <person name="Nakagawa S."/>
            <person name="Senoh A."/>
            <person name="Mizoguchi H."/>
            <person name="Goto Y."/>
            <person name="Shimizu F."/>
            <person name="Wakebe H."/>
            <person name="Hishigaki H."/>
            <person name="Watanabe T."/>
            <person name="Sugiyama A."/>
            <person name="Takemoto M."/>
            <person name="Kawakami B."/>
            <person name="Yamazaki M."/>
            <person name="Watanabe K."/>
            <person name="Kumagai A."/>
            <person name="Itakura S."/>
            <person name="Fukuzumi Y."/>
            <person name="Fujimori Y."/>
            <person name="Komiyama M."/>
            <person name="Tashiro H."/>
            <person name="Tanigami A."/>
            <person name="Fujiwara T."/>
            <person name="Ono T."/>
            <person name="Yamada K."/>
            <person name="Fujii Y."/>
            <person name="Ozaki K."/>
            <person name="Hirao M."/>
            <person name="Ohmori Y."/>
            <person name="Kawabata A."/>
            <person name="Hikiji T."/>
            <person name="Kobatake N."/>
            <person name="Inagaki H."/>
            <person name="Ikema Y."/>
            <person name="Okamoto S."/>
            <person name="Okitani R."/>
            <person name="Kawakami T."/>
            <person name="Noguchi S."/>
            <person name="Itoh T."/>
            <person name="Shigeta K."/>
            <person name="Senba T."/>
            <person name="Matsumura K."/>
            <person name="Nakajima Y."/>
            <person name="Mizuno T."/>
            <person name="Morinaga M."/>
            <person name="Sasaki M."/>
            <person name="Togashi T."/>
            <person name="Oyama M."/>
            <person name="Hata H."/>
            <person name="Watanabe M."/>
            <person name="Komatsu T."/>
            <person name="Mizushima-Sugano J."/>
            <person name="Satoh T."/>
            <person name="Shirai Y."/>
            <person name="Takahashi Y."/>
            <person name="Nakagawa K."/>
            <person name="Okumura K."/>
            <person name="Nagase T."/>
            <person name="Nomura N."/>
            <person name="Kikuchi H."/>
            <person name="Masuho Y."/>
            <person name="Yamashita R."/>
            <person name="Nakai K."/>
            <person name="Yada T."/>
            <person name="Nakamura Y."/>
            <person name="Ohara O."/>
            <person name="Isogai T."/>
            <person name="Sugano S."/>
        </authorList>
    </citation>
    <scope>NUCLEOTIDE SEQUENCE [LARGE SCALE MRNA] (ISOFORMS 1; 2 AND 3)</scope>
    <source>
        <tissue>Placenta</tissue>
        <tissue>Testis</tissue>
        <tissue>Trachea</tissue>
    </source>
</reference>
<reference key="4">
    <citation type="journal article" date="2004" name="Nature">
        <title>The sequence and analysis of duplication-rich human chromosome 16.</title>
        <authorList>
            <person name="Martin J."/>
            <person name="Han C."/>
            <person name="Gordon L.A."/>
            <person name="Terry A."/>
            <person name="Prabhakar S."/>
            <person name="She X."/>
            <person name="Xie G."/>
            <person name="Hellsten U."/>
            <person name="Chan Y.M."/>
            <person name="Altherr M."/>
            <person name="Couronne O."/>
            <person name="Aerts A."/>
            <person name="Bajorek E."/>
            <person name="Black S."/>
            <person name="Blumer H."/>
            <person name="Branscomb E."/>
            <person name="Brown N.C."/>
            <person name="Bruno W.J."/>
            <person name="Buckingham J.M."/>
            <person name="Callen D.F."/>
            <person name="Campbell C.S."/>
            <person name="Campbell M.L."/>
            <person name="Campbell E.W."/>
            <person name="Caoile C."/>
            <person name="Challacombe J.F."/>
            <person name="Chasteen L.A."/>
            <person name="Chertkov O."/>
            <person name="Chi H.C."/>
            <person name="Christensen M."/>
            <person name="Clark L.M."/>
            <person name="Cohn J.D."/>
            <person name="Denys M."/>
            <person name="Detter J.C."/>
            <person name="Dickson M."/>
            <person name="Dimitrijevic-Bussod M."/>
            <person name="Escobar J."/>
            <person name="Fawcett J.J."/>
            <person name="Flowers D."/>
            <person name="Fotopulos D."/>
            <person name="Glavina T."/>
            <person name="Gomez M."/>
            <person name="Gonzales E."/>
            <person name="Goodstein D."/>
            <person name="Goodwin L.A."/>
            <person name="Grady D.L."/>
            <person name="Grigoriev I."/>
            <person name="Groza M."/>
            <person name="Hammon N."/>
            <person name="Hawkins T."/>
            <person name="Haydu L."/>
            <person name="Hildebrand C.E."/>
            <person name="Huang W."/>
            <person name="Israni S."/>
            <person name="Jett J."/>
            <person name="Jewett P.B."/>
            <person name="Kadner K."/>
            <person name="Kimball H."/>
            <person name="Kobayashi A."/>
            <person name="Krawczyk M.-C."/>
            <person name="Leyba T."/>
            <person name="Longmire J.L."/>
            <person name="Lopez F."/>
            <person name="Lou Y."/>
            <person name="Lowry S."/>
            <person name="Ludeman T."/>
            <person name="Manohar C.F."/>
            <person name="Mark G.A."/>
            <person name="McMurray K.L."/>
            <person name="Meincke L.J."/>
            <person name="Morgan J."/>
            <person name="Moyzis R.K."/>
            <person name="Mundt M.O."/>
            <person name="Munk A.C."/>
            <person name="Nandkeshwar R.D."/>
            <person name="Pitluck S."/>
            <person name="Pollard M."/>
            <person name="Predki P."/>
            <person name="Parson-Quintana B."/>
            <person name="Ramirez L."/>
            <person name="Rash S."/>
            <person name="Retterer J."/>
            <person name="Ricke D.O."/>
            <person name="Robinson D.L."/>
            <person name="Rodriguez A."/>
            <person name="Salamov A."/>
            <person name="Saunders E.H."/>
            <person name="Scott D."/>
            <person name="Shough T."/>
            <person name="Stallings R.L."/>
            <person name="Stalvey M."/>
            <person name="Sutherland R.D."/>
            <person name="Tapia R."/>
            <person name="Tesmer J.G."/>
            <person name="Thayer N."/>
            <person name="Thompson L.S."/>
            <person name="Tice H."/>
            <person name="Torney D.C."/>
            <person name="Tran-Gyamfi M."/>
            <person name="Tsai M."/>
            <person name="Ulanovsky L.E."/>
            <person name="Ustaszewska A."/>
            <person name="Vo N."/>
            <person name="White P.S."/>
            <person name="Williams A.L."/>
            <person name="Wills P.L."/>
            <person name="Wu J.-R."/>
            <person name="Wu K."/>
            <person name="Yang J."/>
            <person name="DeJong P."/>
            <person name="Bruce D."/>
            <person name="Doggett N.A."/>
            <person name="Deaven L."/>
            <person name="Schmutz J."/>
            <person name="Grimwood J."/>
            <person name="Richardson P."/>
            <person name="Rokhsar D.S."/>
            <person name="Eichler E.E."/>
            <person name="Gilna P."/>
            <person name="Lucas S.M."/>
            <person name="Myers R.M."/>
            <person name="Rubin E.M."/>
            <person name="Pennacchio L.A."/>
        </authorList>
    </citation>
    <scope>NUCLEOTIDE SEQUENCE [LARGE SCALE GENOMIC DNA]</scope>
</reference>
<reference key="5">
    <citation type="submission" date="2005-07" db="EMBL/GenBank/DDBJ databases">
        <authorList>
            <person name="Mural R.J."/>
            <person name="Istrail S."/>
            <person name="Sutton G.G."/>
            <person name="Florea L."/>
            <person name="Halpern A.L."/>
            <person name="Mobarry C.M."/>
            <person name="Lippert R."/>
            <person name="Walenz B."/>
            <person name="Shatkay H."/>
            <person name="Dew I."/>
            <person name="Miller J.R."/>
            <person name="Flanigan M.J."/>
            <person name="Edwards N.J."/>
            <person name="Bolanos R."/>
            <person name="Fasulo D."/>
            <person name="Halldorsson B.V."/>
            <person name="Hannenhalli S."/>
            <person name="Turner R."/>
            <person name="Yooseph S."/>
            <person name="Lu F."/>
            <person name="Nusskern D.R."/>
            <person name="Shue B.C."/>
            <person name="Zheng X.H."/>
            <person name="Zhong F."/>
            <person name="Delcher A.L."/>
            <person name="Huson D.H."/>
            <person name="Kravitz S.A."/>
            <person name="Mouchard L."/>
            <person name="Reinert K."/>
            <person name="Remington K.A."/>
            <person name="Clark A.G."/>
            <person name="Waterman M.S."/>
            <person name="Eichler E.E."/>
            <person name="Adams M.D."/>
            <person name="Hunkapiller M.W."/>
            <person name="Myers E.W."/>
            <person name="Venter J.C."/>
        </authorList>
    </citation>
    <scope>NUCLEOTIDE SEQUENCE [LARGE SCALE GENOMIC DNA]</scope>
</reference>
<reference key="6">
    <citation type="journal article" date="2004" name="Genome Res.">
        <title>The status, quality, and expansion of the NIH full-length cDNA project: the Mammalian Gene Collection (MGC).</title>
        <authorList>
            <consortium name="The MGC Project Team"/>
        </authorList>
    </citation>
    <scope>NUCLEOTIDE SEQUENCE [LARGE SCALE MRNA] (ISOFORMS 1 AND 4)</scope>
    <source>
        <tissue>Brain</tissue>
        <tissue>Ovary</tissue>
        <tissue>Placenta</tissue>
    </source>
</reference>
<reference key="7">
    <citation type="journal article" date="1998" name="Mol. Cell. Neurosci.">
        <title>Atrophin-1, the DRPLA gene product, interacts with two families of WW domain-containing proteins.</title>
        <authorList>
            <person name="Wood J.D."/>
            <person name="Yuan J."/>
            <person name="Margolis R.L."/>
            <person name="Colomer V."/>
            <person name="Duan K."/>
            <person name="Kushi J."/>
            <person name="Kaminsky Z."/>
            <person name="Kleiderlein J.J. Jr."/>
            <person name="Sharp A.H."/>
            <person name="Ross C.A."/>
        </authorList>
    </citation>
    <scope>INTERACTION WITH ATN1</scope>
    <scope>TISSUE SPECIFICITY</scope>
</reference>
<reference key="8">
    <citation type="journal article" date="2002" name="Am. J. Physiol.">
        <title>Ubiquitin-protein ligase WWP2 binds to and downregulates the epithelial Na(+) channel.</title>
        <authorList>
            <person name="McDonald F.J."/>
            <person name="Western A.H."/>
            <person name="McNeil J.D."/>
            <person name="Thomas B.C."/>
            <person name="Olson D.R."/>
            <person name="Snyder P.M."/>
        </authorList>
    </citation>
    <scope>INTERACTION WITH SCNN1A; SCNN1B AND SCNN1G</scope>
</reference>
<reference key="9">
    <citation type="journal article" date="2002" name="Biochemistry">
        <title>Adenovirus protein involved in virus internalization recruits ubiquitin-protein ligases.</title>
        <authorList>
            <person name="Galinier R."/>
            <person name="Gout E."/>
            <person name="Lortat-Jacob H."/>
            <person name="Wood J."/>
            <person name="Chroboczek J."/>
        </authorList>
    </citation>
    <scope>INTERACTION WITH ADENOVIRUS TYPE 2 PIII (MICROBIAL INFECTION)</scope>
</reference>
<reference key="10">
    <citation type="journal article" date="2002" name="J. Biol. Chem.">
        <title>N4WBP5, a potential target for ubiquitination by the Nedd4 family of proteins, is a novel Golgi-associated protein.</title>
        <authorList>
            <person name="Harvey K.F."/>
            <person name="Shearwin-Whyatt L.M."/>
            <person name="Fotia A."/>
            <person name="Parton R.G."/>
            <person name="Kumar S."/>
        </authorList>
    </citation>
    <scope>INTERACTION WITH NDFIP1</scope>
</reference>
<reference key="11">
    <citation type="journal article" date="2006" name="Nat. Biotechnol.">
        <title>A probability-based approach for high-throughput protein phosphorylation analysis and site localization.</title>
        <authorList>
            <person name="Beausoleil S.A."/>
            <person name="Villen J."/>
            <person name="Gerber S.A."/>
            <person name="Rush J."/>
            <person name="Gygi S.P."/>
        </authorList>
    </citation>
    <scope>PHOSPHORYLATION [LARGE SCALE ANALYSIS] AT SER-211</scope>
    <scope>IDENTIFICATION BY MASS SPECTROMETRY [LARGE SCALE ANALYSIS]</scope>
    <source>
        <tissue>Cervix carcinoma</tissue>
    </source>
</reference>
<reference key="12">
    <citation type="journal article" date="2007" name="Cell">
        <title>Autoinhibition of the HECT-type ubiquitin ligase Smurf2 through its C2 domain.</title>
        <authorList>
            <person name="Wiesner S."/>
            <person name="Ogunjimi A.A."/>
            <person name="Wang H.R."/>
            <person name="Rotin D."/>
            <person name="Sicheri F."/>
            <person name="Wrana J.L."/>
            <person name="Forman-Kay J.D."/>
        </authorList>
    </citation>
    <scope>AUTOINHIBITION BY C2 DOMAIN</scope>
</reference>
<reference key="13">
    <citation type="journal article" date="2009" name="Cell Res.">
        <title>WWP2 promotes degradation of transcription factor OCT4 in human embryonic stem cells.</title>
        <authorList>
            <person name="Xu H."/>
            <person name="Wang W."/>
            <person name="Li C."/>
            <person name="Yu H."/>
            <person name="Yang A."/>
            <person name="Wang B."/>
            <person name="Jin Y."/>
        </authorList>
    </citation>
    <scope>FUNCTION IN UBIQUITINATION OF POU5F1</scope>
    <scope>SUBCELLULAR LOCATION</scope>
    <scope>TISSUE SPECIFICITY</scope>
    <scope>DEVELOPMENTAL STAGE</scope>
    <scope>INTERACTION WITH POU5F1</scope>
    <scope>MUTAGENESIS OF CYS-838</scope>
</reference>
<reference key="14">
    <citation type="journal article" date="2009" name="EMBO Rep.">
        <title>Control of the activity of WW-HECT domain E3 ubiquitin ligases by NDFIP proteins.</title>
        <authorList>
            <person name="Mund T."/>
            <person name="Pelham H.R."/>
        </authorList>
    </citation>
    <scope>ACTIVATION BY NDFIP1 AND NDFIP2</scope>
    <scope>AUTOUBIQUITINATION</scope>
</reference>
<reference key="15">
    <citation type="journal article" date="2009" name="Mol. Cell. Biol.">
        <title>The HECT-type E3 ubiquitin ligase AIP2 inhibits activation-induced T-cell death by catalyzing EGR2 ubiquitination.</title>
        <authorList>
            <person name="Chen A."/>
            <person name="Gao B."/>
            <person name="Zhang J."/>
            <person name="McEwen T."/>
            <person name="Ye S.Q."/>
            <person name="Zhang D."/>
            <person name="Fang D."/>
        </authorList>
    </citation>
    <scope>FUNCTION IN UBIQUITINATION OF EGR2</scope>
    <scope>INTERACTION WITH EGR2</scope>
</reference>
<reference key="16">
    <citation type="journal article" date="2010" name="Mol. Cancer Res.">
        <title>Interactions of ErbB4 and Kap1 connect the growth factor and DNA damage response pathways.</title>
        <authorList>
            <person name="Gilmore-Hebert M."/>
            <person name="Ramabhadran R."/>
            <person name="Stern D.F."/>
        </authorList>
    </citation>
    <scope>IDENTIFICATION BY MASS SPECTROMETRY</scope>
    <scope>INTERACTION WITH ERBB4</scope>
    <scope>SUBCELLULAR LOCATION</scope>
</reference>
<reference key="17">
    <citation type="journal article" date="2011" name="BMC Syst. Biol.">
        <title>Initial characterization of the human central proteome.</title>
        <authorList>
            <person name="Burkard T.R."/>
            <person name="Planyavsky M."/>
            <person name="Kaupe I."/>
            <person name="Breitwieser F.P."/>
            <person name="Buerckstuemmer T."/>
            <person name="Bennett K.L."/>
            <person name="Superti-Furga G."/>
            <person name="Colinge J."/>
        </authorList>
    </citation>
    <scope>IDENTIFICATION BY MASS SPECTROMETRY [LARGE SCALE ANALYSIS]</scope>
</reference>
<reference key="18">
    <citation type="journal article" date="2011" name="EMBO J.">
        <title>SCF(FBXL15) regulates BMP signalling by directing the degradation of HECT-type ubiquitin ligase Smurf1.</title>
        <authorList>
            <person name="Cui Y."/>
            <person name="He S."/>
            <person name="Xing C."/>
            <person name="Lu K."/>
            <person name="Wang J."/>
            <person name="Xing G."/>
            <person name="Meng A."/>
            <person name="Jia S."/>
            <person name="He F."/>
            <person name="Zhang L."/>
        </authorList>
    </citation>
    <scope>UBIQUITINATION</scope>
    <scope>MUTAGENESIS OF LYS-498 AND HIS-500</scope>
</reference>
<reference key="19">
    <citation type="journal article" date="2011" name="J. Virol.">
        <title>Multiple interactions between the ESCRT machinery and arrestin-related proteins: implications for PPXY-dependent budding.</title>
        <authorList>
            <person name="Rauch S."/>
            <person name="Martin-Serrano J."/>
        </authorList>
    </citation>
    <scope>INTERACTION WITH ARRDC1; ARRDC2 AND ARRDC3</scope>
    <scope>DOMAIN</scope>
</reference>
<reference key="20">
    <citation type="journal article" date="2011" name="Sci. Signal.">
        <title>System-wide temporal characterization of the proteome and phosphoproteome of human embryonic stem cell differentiation.</title>
        <authorList>
            <person name="Rigbolt K.T."/>
            <person name="Prokhorova T.A."/>
            <person name="Akimov V."/>
            <person name="Henningsen J."/>
            <person name="Johansen P.T."/>
            <person name="Kratchmarova I."/>
            <person name="Kassem M."/>
            <person name="Mann M."/>
            <person name="Olsen J.V."/>
            <person name="Blagoev B."/>
        </authorList>
    </citation>
    <scope>PHOSPHORYLATION [LARGE SCALE ANALYSIS] AT SER-211</scope>
    <scope>IDENTIFICATION BY MASS SPECTROMETRY [LARGE SCALE ANALYSIS]</scope>
</reference>
<reference key="21">
    <citation type="journal article" date="2012" name="PLoS ONE">
        <title>Mammalian alpha arrestins link activated seven transmembrane receptors to Nedd4 family e3 ubiquitin ligases and interact with beta arrestins.</title>
        <authorList>
            <person name="Shea F.F."/>
            <person name="Rowell J.L."/>
            <person name="Li Y."/>
            <person name="Chang T.H."/>
            <person name="Alvarez C.E."/>
        </authorList>
    </citation>
    <scope>INTERACTION WITH ARRDC4</scope>
</reference>
<reference key="22">
    <citation type="journal article" date="2012" name="Proc. Natl. Acad. Sci. U.S.A.">
        <title>Formation and release of arrestin domain-containing protein 1-mediated microvesicles (ARMMs) at plasma membrane by recruitment of TSG101 protein.</title>
        <authorList>
            <person name="Nabhan J.F."/>
            <person name="Hu R."/>
            <person name="Oh R.S."/>
            <person name="Cohen S.N."/>
            <person name="Lu Q."/>
        </authorList>
    </citation>
    <scope>INTERACTION WITH ARRDC1</scope>
    <scope>DOMAIN</scope>
</reference>
<reference key="23">
    <citation type="journal article" date="2013" name="J. Proteome Res.">
        <title>Toward a comprehensive characterization of a human cancer cell phosphoproteome.</title>
        <authorList>
            <person name="Zhou H."/>
            <person name="Di Palma S."/>
            <person name="Preisinger C."/>
            <person name="Peng M."/>
            <person name="Polat A.N."/>
            <person name="Heck A.J."/>
            <person name="Mohammed S."/>
        </authorList>
    </citation>
    <scope>PHOSPHORYLATION [LARGE SCALE ANALYSIS] AT SER-211</scope>
    <scope>IDENTIFICATION BY MASS SPECTROMETRY [LARGE SCALE ANALYSIS]</scope>
    <source>
        <tissue>Cervix carcinoma</tissue>
        <tissue>Erythroleukemia</tissue>
    </source>
</reference>
<reference key="24">
    <citation type="journal article" date="2015" name="Acta Crystallogr. F">
        <title>Structure of the HECT domain of human WWP2.</title>
        <authorList>
            <person name="Gong W."/>
            <person name="Zhang X."/>
            <person name="Zhang W."/>
            <person name="Li J."/>
            <person name="Li Z."/>
        </authorList>
    </citation>
    <scope>X-RAY CRYSTALLOGRAPHY (2.51 ANGSTROMS) OF 492-865</scope>
</reference>
<proteinExistence type="evidence at protein level"/>
<organism>
    <name type="scientific">Homo sapiens</name>
    <name type="common">Human</name>
    <dbReference type="NCBI Taxonomy" id="9606"/>
    <lineage>
        <taxon>Eukaryota</taxon>
        <taxon>Metazoa</taxon>
        <taxon>Chordata</taxon>
        <taxon>Craniata</taxon>
        <taxon>Vertebrata</taxon>
        <taxon>Euteleostomi</taxon>
        <taxon>Mammalia</taxon>
        <taxon>Eutheria</taxon>
        <taxon>Euarchontoglires</taxon>
        <taxon>Primates</taxon>
        <taxon>Haplorrhini</taxon>
        <taxon>Catarrhini</taxon>
        <taxon>Hominidae</taxon>
        <taxon>Homo</taxon>
    </lineage>
</organism>
<evidence type="ECO:0000250" key="1"/>
<evidence type="ECO:0000250" key="2">
    <source>
        <dbReference type="UniProtKB" id="Q9DBH0"/>
    </source>
</evidence>
<evidence type="ECO:0000255" key="3">
    <source>
        <dbReference type="PROSITE-ProRule" id="PRU00041"/>
    </source>
</evidence>
<evidence type="ECO:0000255" key="4">
    <source>
        <dbReference type="PROSITE-ProRule" id="PRU00104"/>
    </source>
</evidence>
<evidence type="ECO:0000255" key="5">
    <source>
        <dbReference type="PROSITE-ProRule" id="PRU00224"/>
    </source>
</evidence>
<evidence type="ECO:0000256" key="6">
    <source>
        <dbReference type="SAM" id="MobiDB-lite"/>
    </source>
</evidence>
<evidence type="ECO:0000269" key="7">
    <source>
    </source>
</evidence>
<evidence type="ECO:0000269" key="8">
    <source>
    </source>
</evidence>
<evidence type="ECO:0000269" key="9">
    <source>
    </source>
</evidence>
<evidence type="ECO:0000269" key="10">
    <source>
    </source>
</evidence>
<evidence type="ECO:0000269" key="11">
    <source>
    </source>
</evidence>
<evidence type="ECO:0000269" key="12">
    <source>
    </source>
</evidence>
<evidence type="ECO:0000269" key="13">
    <source>
    </source>
</evidence>
<evidence type="ECO:0000269" key="14">
    <source>
    </source>
</evidence>
<evidence type="ECO:0000269" key="15">
    <source>
    </source>
</evidence>
<evidence type="ECO:0000269" key="16">
    <source>
    </source>
</evidence>
<evidence type="ECO:0000269" key="17">
    <source>
    </source>
</evidence>
<evidence type="ECO:0000269" key="18">
    <source>
    </source>
</evidence>
<evidence type="ECO:0000269" key="19">
    <source>
    </source>
</evidence>
<evidence type="ECO:0000303" key="20">
    <source>
    </source>
</evidence>
<evidence type="ECO:0000303" key="21">
    <source>
    </source>
</evidence>
<evidence type="ECO:0000305" key="22"/>
<evidence type="ECO:0007744" key="23">
    <source>
    </source>
</evidence>
<evidence type="ECO:0007744" key="24">
    <source>
    </source>
</evidence>
<evidence type="ECO:0007744" key="25">
    <source>
    </source>
</evidence>
<evidence type="ECO:0007829" key="26">
    <source>
        <dbReference type="PDB" id="5TJ7"/>
    </source>
</evidence>
<evidence type="ECO:0007829" key="27">
    <source>
        <dbReference type="PDB" id="5TJ8"/>
    </source>
</evidence>
<evidence type="ECO:0007829" key="28">
    <source>
        <dbReference type="PDB" id="6J1Z"/>
    </source>
</evidence>
<evidence type="ECO:0007829" key="29">
    <source>
        <dbReference type="PDB" id="6RSS"/>
    </source>
</evidence>
<evidence type="ECO:0007829" key="30">
    <source>
        <dbReference type="PDB" id="8EI7"/>
    </source>
</evidence>
<evidence type="ECO:0007829" key="31">
    <source>
        <dbReference type="PDB" id="8EI8"/>
    </source>
</evidence>
<evidence type="ECO:0007829" key="32">
    <source>
        <dbReference type="PDB" id="9EQH"/>
    </source>
</evidence>
<protein>
    <recommendedName>
        <fullName>NEDD4-like E3 ubiquitin-protein ligase WWP2</fullName>
        <ecNumber evidence="10 12">2.3.2.26</ecNumber>
    </recommendedName>
    <alternativeName>
        <fullName>Atrophin-1-interacting protein 2</fullName>
        <shortName>AIP2</shortName>
    </alternativeName>
    <alternativeName>
        <fullName>HECT-type E3 ubiquitin transferase WWP2</fullName>
    </alternativeName>
    <alternativeName>
        <fullName>WW domain-containing protein 2</fullName>
    </alternativeName>
</protein>
<gene>
    <name type="primary">WWP2</name>
</gene>
<keyword id="KW-0002">3D-structure</keyword>
<keyword id="KW-0025">Alternative splicing</keyword>
<keyword id="KW-0945">Host-virus interaction</keyword>
<keyword id="KW-0539">Nucleus</keyword>
<keyword id="KW-0597">Phosphoprotein</keyword>
<keyword id="KW-1267">Proteomics identification</keyword>
<keyword id="KW-1185">Reference proteome</keyword>
<keyword id="KW-0677">Repeat</keyword>
<keyword id="KW-0808">Transferase</keyword>
<keyword id="KW-0832">Ubl conjugation</keyword>
<keyword id="KW-0833">Ubl conjugation pathway</keyword>
<dbReference type="EC" id="2.3.2.26" evidence="10 12"/>
<dbReference type="EMBL" id="U96114">
    <property type="protein sequence ID" value="AAC51325.1"/>
    <property type="molecule type" value="mRNA"/>
</dbReference>
<dbReference type="EMBL" id="JN712744">
    <property type="protein sequence ID" value="AFK29253.1"/>
    <property type="molecule type" value="mRNA"/>
</dbReference>
<dbReference type="EMBL" id="AK126332">
    <property type="protein sequence ID" value="BAC86528.1"/>
    <property type="status" value="ALT_FRAME"/>
    <property type="molecule type" value="mRNA"/>
</dbReference>
<dbReference type="EMBL" id="AK300266">
    <property type="protein sequence ID" value="BAG62027.1"/>
    <property type="molecule type" value="mRNA"/>
</dbReference>
<dbReference type="EMBL" id="AK312792">
    <property type="protein sequence ID" value="BAG35653.1"/>
    <property type="molecule type" value="mRNA"/>
</dbReference>
<dbReference type="EMBL" id="AC026468">
    <property type="status" value="NOT_ANNOTATED_CDS"/>
    <property type="molecule type" value="Genomic_DNA"/>
</dbReference>
<dbReference type="EMBL" id="AC092115">
    <property type="status" value="NOT_ANNOTATED_CDS"/>
    <property type="molecule type" value="Genomic_DNA"/>
</dbReference>
<dbReference type="EMBL" id="CH471092">
    <property type="protein sequence ID" value="EAW83287.1"/>
    <property type="molecule type" value="Genomic_DNA"/>
</dbReference>
<dbReference type="EMBL" id="BC000108">
    <property type="protein sequence ID" value="AAH00108.1"/>
    <property type="molecule type" value="mRNA"/>
</dbReference>
<dbReference type="EMBL" id="BC013645">
    <property type="protein sequence ID" value="AAH13645.1"/>
    <property type="molecule type" value="mRNA"/>
</dbReference>
<dbReference type="EMBL" id="BC064531">
    <property type="protein sequence ID" value="AAH64531.1"/>
    <property type="molecule type" value="mRNA"/>
</dbReference>
<dbReference type="CCDS" id="CCDS10885.1">
    <molecule id="O00308-1"/>
</dbReference>
<dbReference type="CCDS" id="CCDS58475.1">
    <molecule id="O00308-4"/>
</dbReference>
<dbReference type="CCDS" id="CCDS58476.1">
    <molecule id="O00308-2"/>
</dbReference>
<dbReference type="CCDS" id="CCDS58477.1">
    <molecule id="O00308-3"/>
</dbReference>
<dbReference type="RefSeq" id="NP_001257382.1">
    <molecule id="O00308-2"/>
    <property type="nucleotide sequence ID" value="NM_001270453.2"/>
</dbReference>
<dbReference type="RefSeq" id="NP_001257383.1">
    <molecule id="O00308-1"/>
    <property type="nucleotide sequence ID" value="NM_001270454.2"/>
</dbReference>
<dbReference type="RefSeq" id="NP_001257384.1">
    <molecule id="O00308-4"/>
    <property type="nucleotide sequence ID" value="NM_001270455.2"/>
</dbReference>
<dbReference type="RefSeq" id="NP_008945.2">
    <molecule id="O00308-1"/>
    <property type="nucleotide sequence ID" value="NM_007014.4"/>
</dbReference>
<dbReference type="RefSeq" id="NP_955456.1">
    <molecule id="O00308-3"/>
    <property type="nucleotide sequence ID" value="NM_199424.3"/>
</dbReference>
<dbReference type="RefSeq" id="XP_011521125.1">
    <molecule id="O00308-1"/>
    <property type="nucleotide sequence ID" value="XM_011522823.3"/>
</dbReference>
<dbReference type="RefSeq" id="XP_011521127.1">
    <molecule id="O00308-1"/>
    <property type="nucleotide sequence ID" value="XM_011522825.2"/>
</dbReference>
<dbReference type="RefSeq" id="XP_011521128.1">
    <molecule id="O00308-2"/>
    <property type="nucleotide sequence ID" value="XM_011522826.4"/>
</dbReference>
<dbReference type="RefSeq" id="XP_016878368.1">
    <molecule id="O00308-1"/>
    <property type="nucleotide sequence ID" value="XM_017022879.2"/>
</dbReference>
<dbReference type="RefSeq" id="XP_016878369.1">
    <molecule id="O00308-1"/>
    <property type="nucleotide sequence ID" value="XM_017022880.2"/>
</dbReference>
<dbReference type="RefSeq" id="XP_016878370.1">
    <molecule id="O00308-1"/>
    <property type="nucleotide sequence ID" value="XM_017022881.2"/>
</dbReference>
<dbReference type="RefSeq" id="XP_047289476.1">
    <molecule id="O00308-1"/>
    <property type="nucleotide sequence ID" value="XM_047433520.1"/>
</dbReference>
<dbReference type="RefSeq" id="XP_047289477.1">
    <molecule id="O00308-1"/>
    <property type="nucleotide sequence ID" value="XM_047433521.1"/>
</dbReference>
<dbReference type="RefSeq" id="XP_047289478.1">
    <molecule id="O00308-1"/>
    <property type="nucleotide sequence ID" value="XM_047433522.1"/>
</dbReference>
<dbReference type="RefSeq" id="XP_047289479.1">
    <molecule id="O00308-1"/>
    <property type="nucleotide sequence ID" value="XM_047433523.1"/>
</dbReference>
<dbReference type="RefSeq" id="XP_047289480.1">
    <molecule id="O00308-2"/>
    <property type="nucleotide sequence ID" value="XM_047433524.1"/>
</dbReference>
<dbReference type="RefSeq" id="XP_054235396.1">
    <molecule id="O00308-1"/>
    <property type="nucleotide sequence ID" value="XM_054379421.1"/>
</dbReference>
<dbReference type="RefSeq" id="XP_054235397.1">
    <molecule id="O00308-1"/>
    <property type="nucleotide sequence ID" value="XM_054379422.1"/>
</dbReference>
<dbReference type="RefSeq" id="XP_054235398.1">
    <molecule id="O00308-1"/>
    <property type="nucleotide sequence ID" value="XM_054379423.1"/>
</dbReference>
<dbReference type="RefSeq" id="XP_054235399.1">
    <molecule id="O00308-1"/>
    <property type="nucleotide sequence ID" value="XM_054379424.1"/>
</dbReference>
<dbReference type="RefSeq" id="XP_054235400.1">
    <molecule id="O00308-1"/>
    <property type="nucleotide sequence ID" value="XM_054379425.1"/>
</dbReference>
<dbReference type="RefSeq" id="XP_054235401.1">
    <molecule id="O00308-1"/>
    <property type="nucleotide sequence ID" value="XM_054379426.1"/>
</dbReference>
<dbReference type="RefSeq" id="XP_054235402.1">
    <molecule id="O00308-1"/>
    <property type="nucleotide sequence ID" value="XM_054379427.1"/>
</dbReference>
<dbReference type="RefSeq" id="XP_054235403.1">
    <molecule id="O00308-1"/>
    <property type="nucleotide sequence ID" value="XM_054379428.1"/>
</dbReference>
<dbReference type="RefSeq" id="XP_054235404.1">
    <molecule id="O00308-1"/>
    <property type="nucleotide sequence ID" value="XM_054379429.1"/>
</dbReference>
<dbReference type="RefSeq" id="XP_054235405.1">
    <molecule id="O00308-2"/>
    <property type="nucleotide sequence ID" value="XM_054379430.1"/>
</dbReference>
<dbReference type="RefSeq" id="XP_054235406.1">
    <molecule id="O00308-2"/>
    <property type="nucleotide sequence ID" value="XM_054379431.1"/>
</dbReference>
<dbReference type="PDB" id="4Y07">
    <property type="method" value="X-ray"/>
    <property type="resolution" value="2.51 A"/>
    <property type="chains" value="A=492-865"/>
</dbReference>
<dbReference type="PDB" id="5TJ7">
    <property type="method" value="X-ray"/>
    <property type="resolution" value="2.60 A"/>
    <property type="chains" value="A/B/C/D=334-865"/>
</dbReference>
<dbReference type="PDB" id="5TJ8">
    <property type="method" value="X-ray"/>
    <property type="resolution" value="2.30 A"/>
    <property type="chains" value="A=334-865"/>
</dbReference>
<dbReference type="PDB" id="5TJQ">
    <property type="method" value="X-ray"/>
    <property type="resolution" value="2.75 A"/>
    <property type="chains" value="A=334-865"/>
</dbReference>
<dbReference type="PDB" id="6J1Z">
    <property type="method" value="X-ray"/>
    <property type="resolution" value="2.70 A"/>
    <property type="chains" value="A=330-406, A=480-870"/>
</dbReference>
<dbReference type="PDB" id="6RSS">
    <property type="method" value="NMR"/>
    <property type="chains" value="A=438-480"/>
</dbReference>
<dbReference type="PDB" id="8EI5">
    <property type="method" value="X-ray"/>
    <property type="resolution" value="2.60 A"/>
    <property type="chains" value="A/B/C/D=492-865"/>
</dbReference>
<dbReference type="PDB" id="8EI6">
    <property type="method" value="X-ray"/>
    <property type="resolution" value="3.62 A"/>
    <property type="chains" value="A/B=492-865"/>
</dbReference>
<dbReference type="PDB" id="8EI7">
    <property type="method" value="X-ray"/>
    <property type="resolution" value="2.22 A"/>
    <property type="chains" value="A/B=492-865"/>
</dbReference>
<dbReference type="PDB" id="8EI8">
    <property type="method" value="X-ray"/>
    <property type="resolution" value="2.90 A"/>
    <property type="chains" value="A=492-865"/>
</dbReference>
<dbReference type="PDB" id="9EQH">
    <property type="method" value="X-ray"/>
    <property type="resolution" value="2.05 A"/>
    <property type="chains" value="A=334-865"/>
</dbReference>
<dbReference type="PDBsum" id="4Y07"/>
<dbReference type="PDBsum" id="5TJ7"/>
<dbReference type="PDBsum" id="5TJ8"/>
<dbReference type="PDBsum" id="5TJQ"/>
<dbReference type="PDBsum" id="6J1Z"/>
<dbReference type="PDBsum" id="6RSS"/>
<dbReference type="PDBsum" id="8EI5"/>
<dbReference type="PDBsum" id="8EI6"/>
<dbReference type="PDBsum" id="8EI7"/>
<dbReference type="PDBsum" id="8EI8"/>
<dbReference type="PDBsum" id="9EQH"/>
<dbReference type="SMR" id="O00308"/>
<dbReference type="BioGRID" id="116244">
    <property type="interactions" value="854"/>
</dbReference>
<dbReference type="FunCoup" id="O00308">
    <property type="interactions" value="2600"/>
</dbReference>
<dbReference type="IntAct" id="O00308">
    <property type="interactions" value="176"/>
</dbReference>
<dbReference type="MINT" id="O00308"/>
<dbReference type="STRING" id="9606.ENSP00000352069"/>
<dbReference type="MoonDB" id="O00308">
    <property type="type" value="Predicted"/>
</dbReference>
<dbReference type="GlyGen" id="O00308">
    <property type="glycosylation" value="2 sites, 1 O-linked glycan (1 site)"/>
</dbReference>
<dbReference type="iPTMnet" id="O00308"/>
<dbReference type="PhosphoSitePlus" id="O00308"/>
<dbReference type="SwissPalm" id="O00308"/>
<dbReference type="BioMuta" id="WWP2"/>
<dbReference type="jPOST" id="O00308"/>
<dbReference type="MassIVE" id="O00308"/>
<dbReference type="PaxDb" id="9606-ENSP00000352069"/>
<dbReference type="PeptideAtlas" id="O00308"/>
<dbReference type="ProteomicsDB" id="25823"/>
<dbReference type="ProteomicsDB" id="42051"/>
<dbReference type="ProteomicsDB" id="47835">
    <molecule id="O00308-1"/>
</dbReference>
<dbReference type="Pumba" id="O00308"/>
<dbReference type="Antibodypedia" id="29892">
    <property type="antibodies" value="209 antibodies from 25 providers"/>
</dbReference>
<dbReference type="DNASU" id="11060"/>
<dbReference type="Ensembl" id="ENST00000356003.6">
    <molecule id="O00308-2"/>
    <property type="protein sequence ID" value="ENSP00000348283.3"/>
    <property type="gene ID" value="ENSG00000198373.13"/>
</dbReference>
<dbReference type="Ensembl" id="ENST00000359154.7">
    <molecule id="O00308-1"/>
    <property type="protein sequence ID" value="ENSP00000352069.2"/>
    <property type="gene ID" value="ENSG00000198373.13"/>
</dbReference>
<dbReference type="Ensembl" id="ENST00000568684.1">
    <molecule id="O00308-3"/>
    <property type="protein sequence ID" value="ENSP00000456216.1"/>
    <property type="gene ID" value="ENSG00000198373.13"/>
</dbReference>
<dbReference type="Ensembl" id="ENST00000569174.5">
    <molecule id="O00308-4"/>
    <property type="protein sequence ID" value="ENSP00000455311.1"/>
    <property type="gene ID" value="ENSG00000198373.13"/>
</dbReference>
<dbReference type="GeneID" id="11060"/>
<dbReference type="KEGG" id="hsa:11060"/>
<dbReference type="MANE-Select" id="ENST00000359154.7">
    <property type="protein sequence ID" value="ENSP00000352069.2"/>
    <property type="RefSeq nucleotide sequence ID" value="NM_001270454.2"/>
    <property type="RefSeq protein sequence ID" value="NP_001257383.1"/>
</dbReference>
<dbReference type="UCSC" id="uc002exv.3">
    <molecule id="O00308-1"/>
    <property type="organism name" value="human"/>
</dbReference>
<dbReference type="AGR" id="HGNC:16804"/>
<dbReference type="CTD" id="11060"/>
<dbReference type="DisGeNET" id="11060"/>
<dbReference type="GeneCards" id="WWP2"/>
<dbReference type="HGNC" id="HGNC:16804">
    <property type="gene designation" value="WWP2"/>
</dbReference>
<dbReference type="HPA" id="ENSG00000198373">
    <property type="expression patterns" value="Low tissue specificity"/>
</dbReference>
<dbReference type="MalaCards" id="WWP2"/>
<dbReference type="MIM" id="602308">
    <property type="type" value="gene"/>
</dbReference>
<dbReference type="neXtProt" id="NX_O00308"/>
<dbReference type="OpenTargets" id="ENSG00000198373"/>
<dbReference type="PharmGKB" id="PA134946925"/>
<dbReference type="VEuPathDB" id="HostDB:ENSG00000198373"/>
<dbReference type="eggNOG" id="KOG0940">
    <property type="taxonomic scope" value="Eukaryota"/>
</dbReference>
<dbReference type="GeneTree" id="ENSGT00940000160726"/>
<dbReference type="HOGENOM" id="CLU_828900_0_0_1"/>
<dbReference type="InParanoid" id="O00308"/>
<dbReference type="OMA" id="GWCEGSS"/>
<dbReference type="OrthoDB" id="423283at2759"/>
<dbReference type="PAN-GO" id="O00308">
    <property type="GO annotations" value="6 GO annotations based on evolutionary models"/>
</dbReference>
<dbReference type="PhylomeDB" id="O00308"/>
<dbReference type="TreeFam" id="TF323658"/>
<dbReference type="BRENDA" id="2.3.2.26">
    <property type="organism ID" value="2681"/>
</dbReference>
<dbReference type="PathwayCommons" id="O00308"/>
<dbReference type="Reactome" id="R-HSA-8948751">
    <property type="pathway name" value="Regulation of PTEN stability and activity"/>
</dbReference>
<dbReference type="Reactome" id="R-HSA-9013406">
    <property type="pathway name" value="RHOQ GTPase cycle"/>
</dbReference>
<dbReference type="Reactome" id="R-HSA-9013409">
    <property type="pathway name" value="RHOJ GTPase cycle"/>
</dbReference>
<dbReference type="Reactome" id="R-HSA-9013420">
    <property type="pathway name" value="RHOU GTPase cycle"/>
</dbReference>
<dbReference type="Reactome" id="R-HSA-9013507">
    <property type="pathway name" value="NOTCH3 Activation and Transmission of Signal to the Nucleus"/>
</dbReference>
<dbReference type="SignaLink" id="O00308"/>
<dbReference type="SIGNOR" id="O00308"/>
<dbReference type="UniPathway" id="UPA00143"/>
<dbReference type="BioGRID-ORCS" id="11060">
    <property type="hits" value="13 hits in 1196 CRISPR screens"/>
</dbReference>
<dbReference type="ChiTaRS" id="WWP2">
    <property type="organism name" value="human"/>
</dbReference>
<dbReference type="EvolutionaryTrace" id="O00308"/>
<dbReference type="GeneWiki" id="WWP2"/>
<dbReference type="GenomeRNAi" id="11060"/>
<dbReference type="Pharos" id="O00308">
    <property type="development level" value="Tbio"/>
</dbReference>
<dbReference type="PRO" id="PR:O00308"/>
<dbReference type="Proteomes" id="UP000005640">
    <property type="component" value="Chromosome 16"/>
</dbReference>
<dbReference type="RNAct" id="O00308">
    <property type="molecule type" value="protein"/>
</dbReference>
<dbReference type="Bgee" id="ENSG00000198373">
    <property type="expression patterns" value="Expressed in tibia and 194 other cell types or tissues"/>
</dbReference>
<dbReference type="ExpressionAtlas" id="O00308">
    <property type="expression patterns" value="baseline and differential"/>
</dbReference>
<dbReference type="GO" id="GO:0005737">
    <property type="term" value="C:cytoplasm"/>
    <property type="evidence" value="ECO:0000250"/>
    <property type="project" value="BHF-UCL"/>
</dbReference>
<dbReference type="GO" id="GO:0005829">
    <property type="term" value="C:cytosol"/>
    <property type="evidence" value="ECO:0000304"/>
    <property type="project" value="Reactome"/>
</dbReference>
<dbReference type="GO" id="GO:0070062">
    <property type="term" value="C:extracellular exosome"/>
    <property type="evidence" value="ECO:0007005"/>
    <property type="project" value="UniProtKB"/>
</dbReference>
<dbReference type="GO" id="GO:0016020">
    <property type="term" value="C:membrane"/>
    <property type="evidence" value="ECO:0007005"/>
    <property type="project" value="UniProtKB"/>
</dbReference>
<dbReference type="GO" id="GO:0005634">
    <property type="term" value="C:nucleus"/>
    <property type="evidence" value="ECO:0000314"/>
    <property type="project" value="UniProtKB"/>
</dbReference>
<dbReference type="GO" id="GO:0000151">
    <property type="term" value="C:ubiquitin ligase complex"/>
    <property type="evidence" value="ECO:0000304"/>
    <property type="project" value="ProtInc"/>
</dbReference>
<dbReference type="GO" id="GO:0019870">
    <property type="term" value="F:potassium channel inhibitor activity"/>
    <property type="evidence" value="ECO:0000314"/>
    <property type="project" value="BHF-UCL"/>
</dbReference>
<dbReference type="GO" id="GO:0061629">
    <property type="term" value="F:RNA polymerase II-specific DNA-binding transcription factor binding"/>
    <property type="evidence" value="ECO:0000353"/>
    <property type="project" value="BHF-UCL"/>
</dbReference>
<dbReference type="GO" id="GO:0008134">
    <property type="term" value="F:transcription factor binding"/>
    <property type="evidence" value="ECO:0000353"/>
    <property type="project" value="UniProtKB"/>
</dbReference>
<dbReference type="GO" id="GO:0140416">
    <property type="term" value="F:transcription regulator inhibitor activity"/>
    <property type="evidence" value="ECO:0000250"/>
    <property type="project" value="BHF-UCL"/>
</dbReference>
<dbReference type="GO" id="GO:0044325">
    <property type="term" value="F:transmembrane transporter binding"/>
    <property type="evidence" value="ECO:0000353"/>
    <property type="project" value="BHF-UCL"/>
</dbReference>
<dbReference type="GO" id="GO:0061630">
    <property type="term" value="F:ubiquitin protein ligase activity"/>
    <property type="evidence" value="ECO:0000318"/>
    <property type="project" value="GO_Central"/>
</dbReference>
<dbReference type="GO" id="GO:0004842">
    <property type="term" value="F:ubiquitin-protein transferase activity"/>
    <property type="evidence" value="ECO:0000314"/>
    <property type="project" value="UniProtKB"/>
</dbReference>
<dbReference type="GO" id="GO:0006858">
    <property type="term" value="P:extracellular transport"/>
    <property type="evidence" value="ECO:0000315"/>
    <property type="project" value="UniProtKB"/>
</dbReference>
<dbReference type="GO" id="GO:0045892">
    <property type="term" value="P:negative regulation of DNA-templated transcription"/>
    <property type="evidence" value="ECO:0000250"/>
    <property type="project" value="BHF-UCL"/>
</dbReference>
<dbReference type="GO" id="GO:0010629">
    <property type="term" value="P:negative regulation of gene expression"/>
    <property type="evidence" value="ECO:0000315"/>
    <property type="project" value="UniProtKB"/>
</dbReference>
<dbReference type="GO" id="GO:0045746">
    <property type="term" value="P:negative regulation of Notch signaling pathway"/>
    <property type="evidence" value="ECO:0000304"/>
    <property type="project" value="Reactome"/>
</dbReference>
<dbReference type="GO" id="GO:1903765">
    <property type="term" value="P:negative regulation of potassium ion export across plasma membrane"/>
    <property type="evidence" value="ECO:0000314"/>
    <property type="project" value="BHF-UCL"/>
</dbReference>
<dbReference type="GO" id="GO:0051224">
    <property type="term" value="P:negative regulation of protein transport"/>
    <property type="evidence" value="ECO:0000315"/>
    <property type="project" value="UniProtKB"/>
</dbReference>
<dbReference type="GO" id="GO:0000122">
    <property type="term" value="P:negative regulation of transcription by RNA polymerase II"/>
    <property type="evidence" value="ECO:0000315"/>
    <property type="project" value="BHF-UCL"/>
</dbReference>
<dbReference type="GO" id="GO:0032410">
    <property type="term" value="P:negative regulation of transporter activity"/>
    <property type="evidence" value="ECO:0000314"/>
    <property type="project" value="UniProtKB"/>
</dbReference>
<dbReference type="GO" id="GO:0045944">
    <property type="term" value="P:positive regulation of transcription by RNA polymerase II"/>
    <property type="evidence" value="ECO:0007669"/>
    <property type="project" value="Ensembl"/>
</dbReference>
<dbReference type="GO" id="GO:0043161">
    <property type="term" value="P:proteasome-mediated ubiquitin-dependent protein catabolic process"/>
    <property type="evidence" value="ECO:0000315"/>
    <property type="project" value="UniProtKB"/>
</dbReference>
<dbReference type="GO" id="GO:0051865">
    <property type="term" value="P:protein autoubiquitination"/>
    <property type="evidence" value="ECO:0000314"/>
    <property type="project" value="FlyBase"/>
</dbReference>
<dbReference type="GO" id="GO:0070534">
    <property type="term" value="P:protein K63-linked ubiquitination"/>
    <property type="evidence" value="ECO:0000250"/>
    <property type="project" value="UniProtKB"/>
</dbReference>
<dbReference type="GO" id="GO:0036211">
    <property type="term" value="P:protein modification process"/>
    <property type="evidence" value="ECO:0000304"/>
    <property type="project" value="ProtInc"/>
</dbReference>
<dbReference type="GO" id="GO:0016567">
    <property type="term" value="P:protein ubiquitination"/>
    <property type="evidence" value="ECO:0000314"/>
    <property type="project" value="UniProtKB"/>
</dbReference>
<dbReference type="GO" id="GO:0042391">
    <property type="term" value="P:regulation of membrane potential"/>
    <property type="evidence" value="ECO:0000314"/>
    <property type="project" value="BHF-UCL"/>
</dbReference>
<dbReference type="GO" id="GO:0034765">
    <property type="term" value="P:regulation of monoatomic ion transmembrane transport"/>
    <property type="evidence" value="ECO:0000318"/>
    <property type="project" value="GO_Central"/>
</dbReference>
<dbReference type="GO" id="GO:0046718">
    <property type="term" value="P:symbiont entry into host cell"/>
    <property type="evidence" value="ECO:0000304"/>
    <property type="project" value="UniProtKB"/>
</dbReference>
<dbReference type="GO" id="GO:0006366">
    <property type="term" value="P:transcription by RNA polymerase II"/>
    <property type="evidence" value="ECO:0007669"/>
    <property type="project" value="Ensembl"/>
</dbReference>
<dbReference type="CDD" id="cd04021">
    <property type="entry name" value="C2_E3_ubiquitin_ligase"/>
    <property type="match status" value="1"/>
</dbReference>
<dbReference type="CDD" id="cd00078">
    <property type="entry name" value="HECTc"/>
    <property type="match status" value="1"/>
</dbReference>
<dbReference type="CDD" id="cd00201">
    <property type="entry name" value="WW"/>
    <property type="match status" value="4"/>
</dbReference>
<dbReference type="FunFam" id="2.20.70.10:FF:000005">
    <property type="entry name" value="E3 ubiquitin-protein ligase"/>
    <property type="match status" value="1"/>
</dbReference>
<dbReference type="FunFam" id="2.20.70.10:FF:000009">
    <property type="entry name" value="E3 ubiquitin-protein ligase"/>
    <property type="match status" value="1"/>
</dbReference>
<dbReference type="FunFam" id="2.20.70.10:FF:000023">
    <property type="entry name" value="E3 ubiquitin-protein ligase"/>
    <property type="match status" value="1"/>
</dbReference>
<dbReference type="FunFam" id="2.60.40.150:FF:000082">
    <property type="entry name" value="E3 ubiquitin-protein ligase"/>
    <property type="match status" value="1"/>
</dbReference>
<dbReference type="FunFam" id="3.30.2160.10:FF:000003">
    <property type="entry name" value="E3 ubiquitin-protein ligase"/>
    <property type="match status" value="1"/>
</dbReference>
<dbReference type="FunFam" id="3.90.1750.10:FF:000002">
    <property type="entry name" value="E3 ubiquitin-protein ligase"/>
    <property type="match status" value="1"/>
</dbReference>
<dbReference type="FunFam" id="3.90.1750.10:FF:000026">
    <property type="entry name" value="E3 ubiquitin-protein ligase HACE1"/>
    <property type="match status" value="1"/>
</dbReference>
<dbReference type="FunFam" id="3.30.2410.10:FF:000002">
    <property type="entry name" value="E3 ubiquitin-protein ligase HECW2"/>
    <property type="match status" value="1"/>
</dbReference>
<dbReference type="Gene3D" id="2.20.70.10">
    <property type="match status" value="3"/>
</dbReference>
<dbReference type="Gene3D" id="2.60.40.150">
    <property type="entry name" value="C2 domain"/>
    <property type="match status" value="1"/>
</dbReference>
<dbReference type="Gene3D" id="3.30.2160.10">
    <property type="entry name" value="Hect, E3 ligase catalytic domain"/>
    <property type="match status" value="1"/>
</dbReference>
<dbReference type="Gene3D" id="3.30.2410.10">
    <property type="entry name" value="Hect, E3 ligase catalytic domain"/>
    <property type="match status" value="1"/>
</dbReference>
<dbReference type="Gene3D" id="3.90.1750.10">
    <property type="entry name" value="Hect, E3 ligase catalytic domains"/>
    <property type="match status" value="1"/>
</dbReference>
<dbReference type="InterPro" id="IPR000008">
    <property type="entry name" value="C2_dom"/>
</dbReference>
<dbReference type="InterPro" id="IPR035892">
    <property type="entry name" value="C2_domain_sf"/>
</dbReference>
<dbReference type="InterPro" id="IPR024928">
    <property type="entry name" value="E3_ub_ligase_SMURF1"/>
</dbReference>
<dbReference type="InterPro" id="IPR050409">
    <property type="entry name" value="E3_ubiq-protein_ligase"/>
</dbReference>
<dbReference type="InterPro" id="IPR000569">
    <property type="entry name" value="HECT_dom"/>
</dbReference>
<dbReference type="InterPro" id="IPR035983">
    <property type="entry name" value="Hect_E3_ubiquitin_ligase"/>
</dbReference>
<dbReference type="InterPro" id="IPR001202">
    <property type="entry name" value="WW_dom"/>
</dbReference>
<dbReference type="InterPro" id="IPR036020">
    <property type="entry name" value="WW_dom_sf"/>
</dbReference>
<dbReference type="PANTHER" id="PTHR11254">
    <property type="entry name" value="HECT DOMAIN UBIQUITIN-PROTEIN LIGASE"/>
    <property type="match status" value="1"/>
</dbReference>
<dbReference type="PANTHER" id="PTHR11254:SF396">
    <property type="entry name" value="NEDD4-LIKE E3 UBIQUITIN-PROTEIN LIGASE WWP2"/>
    <property type="match status" value="1"/>
</dbReference>
<dbReference type="Pfam" id="PF00632">
    <property type="entry name" value="HECT"/>
    <property type="match status" value="1"/>
</dbReference>
<dbReference type="Pfam" id="PF00397">
    <property type="entry name" value="WW"/>
    <property type="match status" value="4"/>
</dbReference>
<dbReference type="PIRSF" id="PIRSF001569">
    <property type="entry name" value="E3_ub_ligase_SMURF1"/>
    <property type="match status" value="1"/>
</dbReference>
<dbReference type="SMART" id="SM00239">
    <property type="entry name" value="C2"/>
    <property type="match status" value="1"/>
</dbReference>
<dbReference type="SMART" id="SM00119">
    <property type="entry name" value="HECTc"/>
    <property type="match status" value="1"/>
</dbReference>
<dbReference type="SMART" id="SM00456">
    <property type="entry name" value="WW"/>
    <property type="match status" value="4"/>
</dbReference>
<dbReference type="SUPFAM" id="SSF49562">
    <property type="entry name" value="C2 domain (Calcium/lipid-binding domain, CaLB)"/>
    <property type="match status" value="1"/>
</dbReference>
<dbReference type="SUPFAM" id="SSF56204">
    <property type="entry name" value="Hect, E3 ligase catalytic domain"/>
    <property type="match status" value="1"/>
</dbReference>
<dbReference type="SUPFAM" id="SSF51045">
    <property type="entry name" value="WW domain"/>
    <property type="match status" value="4"/>
</dbReference>
<dbReference type="PROSITE" id="PS50004">
    <property type="entry name" value="C2"/>
    <property type="match status" value="1"/>
</dbReference>
<dbReference type="PROSITE" id="PS50237">
    <property type="entry name" value="HECT"/>
    <property type="match status" value="1"/>
</dbReference>
<dbReference type="PROSITE" id="PS01159">
    <property type="entry name" value="WW_DOMAIN_1"/>
    <property type="match status" value="4"/>
</dbReference>
<dbReference type="PROSITE" id="PS50020">
    <property type="entry name" value="WW_DOMAIN_2"/>
    <property type="match status" value="4"/>
</dbReference>
<name>WWP2_HUMAN</name>